<sequence length="200" mass="21200">MTSSDTPSLRLASASPRRRELLASIGVAVEVAPADIDETPLEDEAPAAYVERLARRKAQVGAEGTTLPTLGSDTAVVVGRRILGKPRDREDAIAMLSALSGTTHEVVTGIAVTGPQGMLSTHVVTRVTLRELQPDEIEAYWRSGEPVDKAGAYAIQGLAAIFVERIEGSHSAVVGLPLFETAKLLTRQGVSLWGERPAVP</sequence>
<protein>
    <recommendedName>
        <fullName evidence="1">dTTP/UTP pyrophosphatase</fullName>
        <shortName evidence="1">dTTPase/UTPase</shortName>
        <ecNumber evidence="1">3.6.1.9</ecNumber>
    </recommendedName>
    <alternativeName>
        <fullName evidence="1">Nucleoside triphosphate pyrophosphatase</fullName>
    </alternativeName>
    <alternativeName>
        <fullName evidence="1">Nucleotide pyrophosphatase</fullName>
        <shortName evidence="1">Nucleotide PPase</shortName>
    </alternativeName>
</protein>
<gene>
    <name type="ordered locus">Csal_2237</name>
</gene>
<organism>
    <name type="scientific">Chromohalobacter salexigens (strain ATCC BAA-138 / DSM 3043 / CIP 106854 / NCIMB 13768 / 1H11)</name>
    <dbReference type="NCBI Taxonomy" id="290398"/>
    <lineage>
        <taxon>Bacteria</taxon>
        <taxon>Pseudomonadati</taxon>
        <taxon>Pseudomonadota</taxon>
        <taxon>Gammaproteobacteria</taxon>
        <taxon>Oceanospirillales</taxon>
        <taxon>Halomonadaceae</taxon>
        <taxon>Chromohalobacter</taxon>
    </lineage>
</organism>
<keyword id="KW-0963">Cytoplasm</keyword>
<keyword id="KW-0378">Hydrolase</keyword>
<keyword id="KW-0546">Nucleotide metabolism</keyword>
<keyword id="KW-1185">Reference proteome</keyword>
<proteinExistence type="inferred from homology"/>
<reference key="1">
    <citation type="journal article" date="2011" name="Stand. Genomic Sci.">
        <title>Complete genome sequence of the halophilic and highly halotolerant Chromohalobacter salexigens type strain (1H11(T)).</title>
        <authorList>
            <person name="Copeland A."/>
            <person name="O'Connor K."/>
            <person name="Lucas S."/>
            <person name="Lapidus A."/>
            <person name="Berry K.W."/>
            <person name="Detter J.C."/>
            <person name="Del Rio T.G."/>
            <person name="Hammon N."/>
            <person name="Dalin E."/>
            <person name="Tice H."/>
            <person name="Pitluck S."/>
            <person name="Bruce D."/>
            <person name="Goodwin L."/>
            <person name="Han C."/>
            <person name="Tapia R."/>
            <person name="Saunders E."/>
            <person name="Schmutz J."/>
            <person name="Brettin T."/>
            <person name="Larimer F."/>
            <person name="Land M."/>
            <person name="Hauser L."/>
            <person name="Vargas C."/>
            <person name="Nieto J.J."/>
            <person name="Kyrpides N.C."/>
            <person name="Ivanova N."/>
            <person name="Goker M."/>
            <person name="Klenk H.P."/>
            <person name="Csonka L.N."/>
            <person name="Woyke T."/>
        </authorList>
    </citation>
    <scope>NUCLEOTIDE SEQUENCE [LARGE SCALE GENOMIC DNA]</scope>
    <source>
        <strain>ATCC BAA-138 / DSM 3043 / CIP 106854 / NCIMB 13768 / 1H11</strain>
    </source>
</reference>
<evidence type="ECO:0000255" key="1">
    <source>
        <dbReference type="HAMAP-Rule" id="MF_00528"/>
    </source>
</evidence>
<dbReference type="EC" id="3.6.1.9" evidence="1"/>
<dbReference type="EMBL" id="CP000285">
    <property type="protein sequence ID" value="ABE59588.1"/>
    <property type="molecule type" value="Genomic_DNA"/>
</dbReference>
<dbReference type="RefSeq" id="WP_011507534.1">
    <property type="nucleotide sequence ID" value="NC_007963.1"/>
</dbReference>
<dbReference type="SMR" id="Q1QVC0"/>
<dbReference type="STRING" id="290398.Csal_2237"/>
<dbReference type="GeneID" id="95334955"/>
<dbReference type="KEGG" id="csa:Csal_2237"/>
<dbReference type="eggNOG" id="COG0424">
    <property type="taxonomic scope" value="Bacteria"/>
</dbReference>
<dbReference type="HOGENOM" id="CLU_040416_2_1_6"/>
<dbReference type="OrthoDB" id="9807767at2"/>
<dbReference type="Proteomes" id="UP000000239">
    <property type="component" value="Chromosome"/>
</dbReference>
<dbReference type="GO" id="GO:0005737">
    <property type="term" value="C:cytoplasm"/>
    <property type="evidence" value="ECO:0007669"/>
    <property type="project" value="UniProtKB-SubCell"/>
</dbReference>
<dbReference type="GO" id="GO:0036218">
    <property type="term" value="F:dTTP diphosphatase activity"/>
    <property type="evidence" value="ECO:0007669"/>
    <property type="project" value="RHEA"/>
</dbReference>
<dbReference type="GO" id="GO:0036221">
    <property type="term" value="F:UTP diphosphatase activity"/>
    <property type="evidence" value="ECO:0007669"/>
    <property type="project" value="RHEA"/>
</dbReference>
<dbReference type="GO" id="GO:0009117">
    <property type="term" value="P:nucleotide metabolic process"/>
    <property type="evidence" value="ECO:0007669"/>
    <property type="project" value="UniProtKB-KW"/>
</dbReference>
<dbReference type="CDD" id="cd00555">
    <property type="entry name" value="Maf"/>
    <property type="match status" value="1"/>
</dbReference>
<dbReference type="Gene3D" id="3.90.950.10">
    <property type="match status" value="1"/>
</dbReference>
<dbReference type="HAMAP" id="MF_00528">
    <property type="entry name" value="Maf"/>
    <property type="match status" value="1"/>
</dbReference>
<dbReference type="InterPro" id="IPR029001">
    <property type="entry name" value="ITPase-like_fam"/>
</dbReference>
<dbReference type="InterPro" id="IPR003697">
    <property type="entry name" value="Maf-like"/>
</dbReference>
<dbReference type="NCBIfam" id="TIGR00172">
    <property type="entry name" value="maf"/>
    <property type="match status" value="1"/>
</dbReference>
<dbReference type="PANTHER" id="PTHR43213">
    <property type="entry name" value="BIFUNCTIONAL DTTP/UTP PYROPHOSPHATASE/METHYLTRANSFERASE PROTEIN-RELATED"/>
    <property type="match status" value="1"/>
</dbReference>
<dbReference type="PANTHER" id="PTHR43213:SF5">
    <property type="entry name" value="BIFUNCTIONAL DTTP_UTP PYROPHOSPHATASE_METHYLTRANSFERASE PROTEIN-RELATED"/>
    <property type="match status" value="1"/>
</dbReference>
<dbReference type="Pfam" id="PF02545">
    <property type="entry name" value="Maf"/>
    <property type="match status" value="1"/>
</dbReference>
<dbReference type="PIRSF" id="PIRSF006305">
    <property type="entry name" value="Maf"/>
    <property type="match status" value="1"/>
</dbReference>
<dbReference type="SUPFAM" id="SSF52972">
    <property type="entry name" value="ITPase-like"/>
    <property type="match status" value="1"/>
</dbReference>
<accession>Q1QVC0</accession>
<comment type="function">
    <text evidence="1">Nucleoside triphosphate pyrophosphatase that hydrolyzes dTTP and UTP. May have a dual role in cell division arrest and in preventing the incorporation of modified nucleotides into cellular nucleic acids.</text>
</comment>
<comment type="catalytic activity">
    <reaction evidence="1">
        <text>dTTP + H2O = dTMP + diphosphate + H(+)</text>
        <dbReference type="Rhea" id="RHEA:28534"/>
        <dbReference type="ChEBI" id="CHEBI:15377"/>
        <dbReference type="ChEBI" id="CHEBI:15378"/>
        <dbReference type="ChEBI" id="CHEBI:33019"/>
        <dbReference type="ChEBI" id="CHEBI:37568"/>
        <dbReference type="ChEBI" id="CHEBI:63528"/>
        <dbReference type="EC" id="3.6.1.9"/>
    </reaction>
</comment>
<comment type="catalytic activity">
    <reaction evidence="1">
        <text>UTP + H2O = UMP + diphosphate + H(+)</text>
        <dbReference type="Rhea" id="RHEA:29395"/>
        <dbReference type="ChEBI" id="CHEBI:15377"/>
        <dbReference type="ChEBI" id="CHEBI:15378"/>
        <dbReference type="ChEBI" id="CHEBI:33019"/>
        <dbReference type="ChEBI" id="CHEBI:46398"/>
        <dbReference type="ChEBI" id="CHEBI:57865"/>
        <dbReference type="EC" id="3.6.1.9"/>
    </reaction>
</comment>
<comment type="cofactor">
    <cofactor evidence="1">
        <name>a divalent metal cation</name>
        <dbReference type="ChEBI" id="CHEBI:60240"/>
    </cofactor>
</comment>
<comment type="subcellular location">
    <subcellularLocation>
        <location evidence="1">Cytoplasm</location>
    </subcellularLocation>
</comment>
<comment type="similarity">
    <text evidence="1">Belongs to the Maf family. YhdE subfamily.</text>
</comment>
<name>NTPPA_CHRSD</name>
<feature type="chain" id="PRO_0000267284" description="dTTP/UTP pyrophosphatase">
    <location>
        <begin position="1"/>
        <end position="200"/>
    </location>
</feature>
<feature type="active site" description="Proton acceptor" evidence="1">
    <location>
        <position position="73"/>
    </location>
</feature>
<feature type="site" description="Important for substrate specificity" evidence="1">
    <location>
        <position position="17"/>
    </location>
</feature>
<feature type="site" description="Important for substrate specificity" evidence="1">
    <location>
        <position position="74"/>
    </location>
</feature>
<feature type="site" description="Important for substrate specificity" evidence="1">
    <location>
        <position position="156"/>
    </location>
</feature>